<evidence type="ECO:0000255" key="1">
    <source>
        <dbReference type="HAMAP-Rule" id="MF_00254"/>
    </source>
</evidence>
<accession>Q5M0Y6</accession>
<keyword id="KW-0030">Aminoacyl-tRNA synthetase</keyword>
<keyword id="KW-0067">ATP-binding</keyword>
<keyword id="KW-0963">Cytoplasm</keyword>
<keyword id="KW-0436">Ligase</keyword>
<keyword id="KW-0547">Nucleotide-binding</keyword>
<keyword id="KW-0648">Protein biosynthesis</keyword>
<organism>
    <name type="scientific">Streptococcus thermophilus (strain CNRZ 1066)</name>
    <dbReference type="NCBI Taxonomy" id="299768"/>
    <lineage>
        <taxon>Bacteria</taxon>
        <taxon>Bacillati</taxon>
        <taxon>Bacillota</taxon>
        <taxon>Bacilli</taxon>
        <taxon>Lactobacillales</taxon>
        <taxon>Streptococcaceae</taxon>
        <taxon>Streptococcus</taxon>
    </lineage>
</organism>
<reference key="1">
    <citation type="journal article" date="2004" name="Nat. Biotechnol.">
        <title>Complete sequence and comparative genome analysis of the dairy bacterium Streptococcus thermophilus.</title>
        <authorList>
            <person name="Bolotin A."/>
            <person name="Quinquis B."/>
            <person name="Renault P."/>
            <person name="Sorokin A."/>
            <person name="Ehrlich S.D."/>
            <person name="Kulakauskas S."/>
            <person name="Lapidus A."/>
            <person name="Goltsman E."/>
            <person name="Mazur M."/>
            <person name="Pusch G.D."/>
            <person name="Fonstein M."/>
            <person name="Overbeek R."/>
            <person name="Kyprides N."/>
            <person name="Purnelle B."/>
            <person name="Prozzi D."/>
            <person name="Ngui K."/>
            <person name="Masuy D."/>
            <person name="Hancy F."/>
            <person name="Burteau S."/>
            <person name="Boutry M."/>
            <person name="Delcour J."/>
            <person name="Goffeau A."/>
            <person name="Hols P."/>
        </authorList>
    </citation>
    <scope>NUCLEOTIDE SEQUENCE [LARGE SCALE GENOMIC DNA]</scope>
    <source>
        <strain>CNRZ 1066</strain>
    </source>
</reference>
<proteinExistence type="inferred from homology"/>
<comment type="catalytic activity">
    <reaction evidence="1">
        <text>tRNA(Gly) + glycine + ATP = glycyl-tRNA(Gly) + AMP + diphosphate</text>
        <dbReference type="Rhea" id="RHEA:16013"/>
        <dbReference type="Rhea" id="RHEA-COMP:9664"/>
        <dbReference type="Rhea" id="RHEA-COMP:9683"/>
        <dbReference type="ChEBI" id="CHEBI:30616"/>
        <dbReference type="ChEBI" id="CHEBI:33019"/>
        <dbReference type="ChEBI" id="CHEBI:57305"/>
        <dbReference type="ChEBI" id="CHEBI:78442"/>
        <dbReference type="ChEBI" id="CHEBI:78522"/>
        <dbReference type="ChEBI" id="CHEBI:456215"/>
        <dbReference type="EC" id="6.1.1.14"/>
    </reaction>
</comment>
<comment type="subunit">
    <text evidence="1">Tetramer of two alpha and two beta subunits.</text>
</comment>
<comment type="subcellular location">
    <subcellularLocation>
        <location evidence="1">Cytoplasm</location>
    </subcellularLocation>
</comment>
<comment type="similarity">
    <text evidence="1">Belongs to the class-II aminoacyl-tRNA synthetase family.</text>
</comment>
<feature type="chain" id="PRO_1000047509" description="Glycine--tRNA ligase alpha subunit">
    <location>
        <begin position="1"/>
        <end position="305"/>
    </location>
</feature>
<dbReference type="EC" id="6.1.1.14" evidence="1"/>
<dbReference type="EMBL" id="CP000024">
    <property type="protein sequence ID" value="AAV62102.1"/>
    <property type="molecule type" value="Genomic_DNA"/>
</dbReference>
<dbReference type="RefSeq" id="WP_002949990.1">
    <property type="nucleotide sequence ID" value="NC_006449.1"/>
</dbReference>
<dbReference type="SMR" id="Q5M0Y6"/>
<dbReference type="GeneID" id="66898412"/>
<dbReference type="KEGG" id="stc:str0505"/>
<dbReference type="HOGENOM" id="CLU_057066_1_0_9"/>
<dbReference type="GO" id="GO:0005829">
    <property type="term" value="C:cytosol"/>
    <property type="evidence" value="ECO:0007669"/>
    <property type="project" value="TreeGrafter"/>
</dbReference>
<dbReference type="GO" id="GO:0005524">
    <property type="term" value="F:ATP binding"/>
    <property type="evidence" value="ECO:0007669"/>
    <property type="project" value="UniProtKB-UniRule"/>
</dbReference>
<dbReference type="GO" id="GO:0140096">
    <property type="term" value="F:catalytic activity, acting on a protein"/>
    <property type="evidence" value="ECO:0007669"/>
    <property type="project" value="UniProtKB-ARBA"/>
</dbReference>
<dbReference type="GO" id="GO:0004820">
    <property type="term" value="F:glycine-tRNA ligase activity"/>
    <property type="evidence" value="ECO:0007669"/>
    <property type="project" value="UniProtKB-UniRule"/>
</dbReference>
<dbReference type="GO" id="GO:0016740">
    <property type="term" value="F:transferase activity"/>
    <property type="evidence" value="ECO:0007669"/>
    <property type="project" value="UniProtKB-ARBA"/>
</dbReference>
<dbReference type="GO" id="GO:0006426">
    <property type="term" value="P:glycyl-tRNA aminoacylation"/>
    <property type="evidence" value="ECO:0007669"/>
    <property type="project" value="UniProtKB-UniRule"/>
</dbReference>
<dbReference type="CDD" id="cd00733">
    <property type="entry name" value="GlyRS_alpha_core"/>
    <property type="match status" value="1"/>
</dbReference>
<dbReference type="FunFam" id="3.30.930.10:FF:000006">
    <property type="entry name" value="Glycine--tRNA ligase alpha subunit"/>
    <property type="match status" value="1"/>
</dbReference>
<dbReference type="Gene3D" id="3.30.930.10">
    <property type="entry name" value="Bira Bifunctional Protein, Domain 2"/>
    <property type="match status" value="1"/>
</dbReference>
<dbReference type="Gene3D" id="1.20.58.180">
    <property type="entry name" value="Class II aaRS and biotin synthetases, domain 2"/>
    <property type="match status" value="1"/>
</dbReference>
<dbReference type="HAMAP" id="MF_00254">
    <property type="entry name" value="Gly_tRNA_synth_alpha"/>
    <property type="match status" value="1"/>
</dbReference>
<dbReference type="InterPro" id="IPR045864">
    <property type="entry name" value="aa-tRNA-synth_II/BPL/LPL"/>
</dbReference>
<dbReference type="InterPro" id="IPR006194">
    <property type="entry name" value="Gly-tRNA-synth_heterodimer"/>
</dbReference>
<dbReference type="InterPro" id="IPR002310">
    <property type="entry name" value="Gly-tRNA_ligase_asu"/>
</dbReference>
<dbReference type="NCBIfam" id="TIGR00388">
    <property type="entry name" value="glyQ"/>
    <property type="match status" value="1"/>
</dbReference>
<dbReference type="NCBIfam" id="NF006827">
    <property type="entry name" value="PRK09348.1"/>
    <property type="match status" value="1"/>
</dbReference>
<dbReference type="PANTHER" id="PTHR30075:SF2">
    <property type="entry name" value="GLYCINE--TRNA LIGASE, CHLOROPLASTIC_MITOCHONDRIAL 2"/>
    <property type="match status" value="1"/>
</dbReference>
<dbReference type="PANTHER" id="PTHR30075">
    <property type="entry name" value="GLYCYL-TRNA SYNTHETASE"/>
    <property type="match status" value="1"/>
</dbReference>
<dbReference type="Pfam" id="PF02091">
    <property type="entry name" value="tRNA-synt_2e"/>
    <property type="match status" value="1"/>
</dbReference>
<dbReference type="PRINTS" id="PR01044">
    <property type="entry name" value="TRNASYNTHGA"/>
</dbReference>
<dbReference type="SUPFAM" id="SSF55681">
    <property type="entry name" value="Class II aaRS and biotin synthetases"/>
    <property type="match status" value="1"/>
</dbReference>
<dbReference type="PROSITE" id="PS50861">
    <property type="entry name" value="AA_TRNA_LIGASE_II_GLYAB"/>
    <property type="match status" value="1"/>
</dbReference>
<name>SYGA_STRT1</name>
<protein>
    <recommendedName>
        <fullName evidence="1">Glycine--tRNA ligase alpha subunit</fullName>
        <ecNumber evidence="1">6.1.1.14</ecNumber>
    </recommendedName>
    <alternativeName>
        <fullName evidence="1">Glycyl-tRNA synthetase alpha subunit</fullName>
        <shortName evidence="1">GlyRS</shortName>
    </alternativeName>
</protein>
<sequence length="305" mass="34903">MSKKLTFQEIILTLQQYWNDQGCMLMQAYDNEKGAGTMSPYTFLRAIGPEPWNAAYVEPSRRPADGRYGENPNRLYQHHQFQVVMKPSPSNIQELYLESLEKLGINPLEHDVRFVEDNWENPSTGSAGLGWEVWLDGMEITQFTYFQQVGGLATGPVTAEVTYGLERLASYIQEVDSVYDIEWAPGVKYGEIFLQPEYEHSKYSFEVSDQDMLLENFEKFEKEAGRALELGLVHPAYDYVLKCSHTFNLLDARGAVSVTERAGYIARIRNLARVVAKTFVAERKKLGYPLLDEATRKKLLAEEEE</sequence>
<gene>
    <name evidence="1" type="primary">glyQ</name>
    <name type="ordered locus">str0505</name>
</gene>